<feature type="signal peptide" evidence="7">
    <location>
        <begin position="1"/>
        <end position="18"/>
    </location>
</feature>
<feature type="propeptide" id="PRO_0000279567" evidence="1">
    <location>
        <begin position="19"/>
        <end position="26"/>
    </location>
</feature>
<feature type="chain" id="PRO_0000279568" description="Dermonecrotic toxin LiSicTox-alphaII1">
    <location>
        <begin position="27"/>
        <end position="305"/>
    </location>
</feature>
<feature type="active site" evidence="6">
    <location>
        <position position="38"/>
    </location>
</feature>
<feature type="active site" description="Nucleophile" evidence="6">
    <location>
        <position position="74"/>
    </location>
</feature>
<feature type="binding site" evidence="6">
    <location>
        <position position="58"/>
    </location>
    <ligand>
        <name>Mg(2+)</name>
        <dbReference type="ChEBI" id="CHEBI:18420"/>
    </ligand>
</feature>
<feature type="binding site" evidence="6">
    <location>
        <position position="60"/>
    </location>
    <ligand>
        <name>Mg(2+)</name>
        <dbReference type="ChEBI" id="CHEBI:18420"/>
    </ligand>
</feature>
<feature type="binding site" evidence="6">
    <location>
        <position position="118"/>
    </location>
    <ligand>
        <name>Mg(2+)</name>
        <dbReference type="ChEBI" id="CHEBI:18420"/>
    </ligand>
</feature>
<feature type="disulfide bond" evidence="4">
    <location>
        <begin position="78"/>
        <end position="84"/>
    </location>
</feature>
<feature type="disulfide bond" evidence="4">
    <location>
        <begin position="80"/>
        <end position="223"/>
    </location>
</feature>
<name>A21_LOXIN</name>
<proteinExistence type="evidence at protein level"/>
<protein>
    <recommendedName>
        <fullName>Dermonecrotic toxin LiSicTox-alphaII1</fullName>
        <ecNumber evidence="5">4.6.1.-</ecNumber>
    </recommendedName>
    <alternativeName>
        <fullName>Dermonecrotic toxin 4</fullName>
        <shortName evidence="11">DT4</shortName>
    </alternativeName>
    <alternativeName>
        <fullName evidence="10 11">LiRecDT4</fullName>
    </alternativeName>
    <alternativeName>
        <fullName>Phospholipase D</fullName>
    </alternativeName>
    <alternativeName>
        <fullName>Sphingomyelin phosphodiesterase D 4</fullName>
        <shortName>SMD 4</shortName>
        <shortName>SMase D 4</shortName>
        <shortName>Sphingomyelinase D 4</shortName>
    </alternativeName>
</protein>
<evidence type="ECO:0000250" key="1"/>
<evidence type="ECO:0000250" key="2">
    <source>
        <dbReference type="UniProtKB" id="A0A0D4WTV1"/>
    </source>
</evidence>
<evidence type="ECO:0000250" key="3">
    <source>
        <dbReference type="UniProtKB" id="A0A0D4WV12"/>
    </source>
</evidence>
<evidence type="ECO:0000250" key="4">
    <source>
        <dbReference type="UniProtKB" id="P0CE80"/>
    </source>
</evidence>
<evidence type="ECO:0000250" key="5">
    <source>
        <dbReference type="UniProtKB" id="Q4ZFU2"/>
    </source>
</evidence>
<evidence type="ECO:0000250" key="6">
    <source>
        <dbReference type="UniProtKB" id="Q8I914"/>
    </source>
</evidence>
<evidence type="ECO:0000255" key="7"/>
<evidence type="ECO:0000269" key="8">
    <source>
    </source>
</evidence>
<evidence type="ECO:0000269" key="9">
    <source>
    </source>
</evidence>
<evidence type="ECO:0000303" key="10">
    <source>
    </source>
</evidence>
<evidence type="ECO:0000303" key="11">
    <source>
    </source>
</evidence>
<evidence type="ECO:0000305" key="12"/>
<evidence type="ECO:0000305" key="13">
    <source>
    </source>
</evidence>
<comment type="function">
    <text evidence="2 4 8 9">Dermonecrotic toxins cleave the phosphodiester linkage between the phosphate and headgroup of certain phospholipids (sphingolipid and lysolipid substrates), forming an alcohol (often choline) and a cyclic phosphate (By similarity). This toxin acts on sphingomyelin (SM) wih high activity (PubMed:17296256). It may also act on ceramide phosphoethanolamine (CPE), lysophosphatidylcholine (LPC) and lysophosphatidylethanolamine (LPE), but not on lysophosphatidylserine (LPS), and lysophosphatidylglycerol (LPG) (By similarity). It acts by transphosphatidylation, releasing exclusively cyclic phosphate products as second products (By similarity). Shows high hemolytic activity (PubMed:17296256, PubMed:21590705). Causes dermonecrosis, induces inflammatory response, platelet aggregation and increases vessel permeability (PubMed:17296256). Shows no lethality when injected at higher dose into mice (PubMed:17296256). May cause complement-dependent hemolysis as well as in a complement-independent manner (By similarity). The hemolysis provoked in a complement-independent manner may be composed of several steps (By similarity). The toxin may bind to erythrocyte membranes, may hydrolyze membrane phospholipids (SM and LPC) thus generating metabolism products that may cause hemolysis, probably by provoking an increase of calcium inside cells (By similarity). The calcium influx may be due to the opening of L-type calcium channels, since L-type calcium channel blockers inhibit calcium influx (By similarity).</text>
</comment>
<comment type="catalytic activity">
    <reaction evidence="13">
        <text>an N-(acyl)-sphingosylphosphocholine = an N-(acyl)-sphingosyl-1,3-cyclic phosphate + choline</text>
        <dbReference type="Rhea" id="RHEA:60652"/>
        <dbReference type="ChEBI" id="CHEBI:15354"/>
        <dbReference type="ChEBI" id="CHEBI:64583"/>
        <dbReference type="ChEBI" id="CHEBI:143892"/>
    </reaction>
</comment>
<comment type="catalytic activity">
    <reaction evidence="2">
        <text>an N-(acyl)-sphingosylphosphoethanolamine = an N-(acyl)-sphingosyl-1,3-cyclic phosphate + ethanolamine</text>
        <dbReference type="Rhea" id="RHEA:60648"/>
        <dbReference type="ChEBI" id="CHEBI:57603"/>
        <dbReference type="ChEBI" id="CHEBI:143891"/>
        <dbReference type="ChEBI" id="CHEBI:143892"/>
    </reaction>
</comment>
<comment type="catalytic activity">
    <reaction evidence="2">
        <text>a 1-acyl-sn-glycero-3-phosphocholine = a 1-acyl-sn-glycero-2,3-cyclic phosphate + choline</text>
        <dbReference type="Rhea" id="RHEA:60700"/>
        <dbReference type="ChEBI" id="CHEBI:15354"/>
        <dbReference type="ChEBI" id="CHEBI:58168"/>
        <dbReference type="ChEBI" id="CHEBI:143947"/>
    </reaction>
</comment>
<comment type="catalytic activity">
    <reaction evidence="2">
        <text>a 1-acyl-sn-glycero-3-phosphoethanolamine = a 1-acyl-sn-glycero-2,3-cyclic phosphate + ethanolamine</text>
        <dbReference type="Rhea" id="RHEA:60704"/>
        <dbReference type="ChEBI" id="CHEBI:57603"/>
        <dbReference type="ChEBI" id="CHEBI:64381"/>
        <dbReference type="ChEBI" id="CHEBI:143947"/>
    </reaction>
</comment>
<comment type="cofactor">
    <cofactor evidence="6">
        <name>Mg(2+)</name>
        <dbReference type="ChEBI" id="CHEBI:18420"/>
    </cofactor>
    <text evidence="6">Binds 1 Mg(2+) ion per subunit.</text>
</comment>
<comment type="subcellular location">
    <subcellularLocation>
        <location evidence="13">Secreted</location>
    </subcellularLocation>
</comment>
<comment type="tissue specificity">
    <text evidence="13">Expressed by the venom gland.</text>
</comment>
<comment type="similarity">
    <text evidence="12">Belongs to the arthropod phospholipase D family. Class II subfamily. Class IIa sub-subfamily.</text>
</comment>
<comment type="caution">
    <text evidence="2 3 5">The most common activity assay for dermonecrotic toxins detects enzymatic activity by monitoring choline release from substrate. Liberation of choline from sphingomyelin (SM) or lysophosphatidylcholine (LPC) is commonly assumed to result from substrate hydrolysis, giving either ceramide-1-phosphate (C1P) or lysophosphatidic acid (LPA), respectively, as a second product. However, two studies from Lajoie and colleagues (2013 and 2015) report the observation of exclusive formation of cyclic phosphate products as second products, resulting from intramolecular transphosphatidylation. Cyclic phosphates have vastly different biological properties from their monoester counterparts, and they may be relevant to the pathology of brown spider envenomation.</text>
</comment>
<accession>Q1W695</accession>
<sequence length="305" mass="34869">MLLHIALILGCWSVFSEGAETDVAERADGRRPIWNMGHMVNGIWQIDQFVDLGVNSIEFDINFDKNGKPVYTYHGVPCDCFRSCLNWEYFGEFLTALRHRTTPGDKLYKEKLILFVFDMKTNSLYDNQAYQAGVNMATDIFKYYWNNGQNGGRAYFILSIPNLNHYDLIKGFRETITKKGHPELMEKVGYDFSANDNIPDVEKAYGKVGVTDHVWQSDGITNCIARGLSRVKEAVKERDSGGVINKVYIWTIDKFSSTRDALDAGVDGIMTNYPYVLNDVLKEGAYKNKFRMATYEDNPWVTFKA</sequence>
<organism>
    <name type="scientific">Loxosceles intermedia</name>
    <name type="common">Brown spider</name>
    <dbReference type="NCBI Taxonomy" id="58218"/>
    <lineage>
        <taxon>Eukaryota</taxon>
        <taxon>Metazoa</taxon>
        <taxon>Ecdysozoa</taxon>
        <taxon>Arthropoda</taxon>
        <taxon>Chelicerata</taxon>
        <taxon>Arachnida</taxon>
        <taxon>Araneae</taxon>
        <taxon>Araneomorphae</taxon>
        <taxon>Haplogynae</taxon>
        <taxon>Scytodoidea</taxon>
        <taxon>Sicariidae</taxon>
        <taxon>Loxosceles</taxon>
    </lineage>
</organism>
<keyword id="KW-0204">Cytolysis</keyword>
<keyword id="KW-1061">Dermonecrotic toxin</keyword>
<keyword id="KW-1015">Disulfide bond</keyword>
<keyword id="KW-0354">Hemolysis</keyword>
<keyword id="KW-0442">Lipid degradation</keyword>
<keyword id="KW-0443">Lipid metabolism</keyword>
<keyword id="KW-0456">Lyase</keyword>
<keyword id="KW-0460">Magnesium</keyword>
<keyword id="KW-0479">Metal-binding</keyword>
<keyword id="KW-0964">Secreted</keyword>
<keyword id="KW-0732">Signal</keyword>
<keyword id="KW-0800">Toxin</keyword>
<keyword id="KW-0865">Zymogen</keyword>
<dbReference type="EC" id="4.6.1.-" evidence="5"/>
<dbReference type="EMBL" id="DQ431848">
    <property type="protein sequence ID" value="ABD91846.1"/>
    <property type="molecule type" value="mRNA"/>
</dbReference>
<dbReference type="SMR" id="Q1W695"/>
<dbReference type="ArachnoServer" id="AS000144">
    <property type="toxin name" value="Sphingomyelinase D (LiSicTox-alphaII1)"/>
</dbReference>
<dbReference type="GO" id="GO:0005576">
    <property type="term" value="C:extracellular region"/>
    <property type="evidence" value="ECO:0000303"/>
    <property type="project" value="UniProtKB"/>
</dbReference>
<dbReference type="GO" id="GO:0016829">
    <property type="term" value="F:lyase activity"/>
    <property type="evidence" value="ECO:0007669"/>
    <property type="project" value="UniProtKB-KW"/>
</dbReference>
<dbReference type="GO" id="GO:0046872">
    <property type="term" value="F:metal ion binding"/>
    <property type="evidence" value="ECO:0007669"/>
    <property type="project" value="UniProtKB-KW"/>
</dbReference>
<dbReference type="GO" id="GO:0004620">
    <property type="term" value="F:phospholipase activity"/>
    <property type="evidence" value="ECO:0000314"/>
    <property type="project" value="UniProtKB"/>
</dbReference>
<dbReference type="GO" id="GO:0008081">
    <property type="term" value="F:phosphoric diester hydrolase activity"/>
    <property type="evidence" value="ECO:0007669"/>
    <property type="project" value="InterPro"/>
</dbReference>
<dbReference type="GO" id="GO:0090729">
    <property type="term" value="F:toxin activity"/>
    <property type="evidence" value="ECO:0000314"/>
    <property type="project" value="UniProtKB"/>
</dbReference>
<dbReference type="GO" id="GO:0031640">
    <property type="term" value="P:killing of cells of another organism"/>
    <property type="evidence" value="ECO:0007669"/>
    <property type="project" value="UniProtKB-KW"/>
</dbReference>
<dbReference type="GO" id="GO:0016042">
    <property type="term" value="P:lipid catabolic process"/>
    <property type="evidence" value="ECO:0007669"/>
    <property type="project" value="UniProtKB-KW"/>
</dbReference>
<dbReference type="GO" id="GO:0006644">
    <property type="term" value="P:phospholipid metabolic process"/>
    <property type="evidence" value="ECO:0000314"/>
    <property type="project" value="UniProtKB"/>
</dbReference>
<dbReference type="GO" id="GO:0044398">
    <property type="term" value="P:venom-mediated edema in another organism"/>
    <property type="evidence" value="ECO:0000314"/>
    <property type="project" value="UniProtKB"/>
</dbReference>
<dbReference type="GO" id="GO:0044478">
    <property type="term" value="P:venom-mediated platelet aggregation"/>
    <property type="evidence" value="ECO:0000314"/>
    <property type="project" value="UniProtKB"/>
</dbReference>
<dbReference type="CDD" id="cd08576">
    <property type="entry name" value="GDPD_like_SMaseD_PLD"/>
    <property type="match status" value="1"/>
</dbReference>
<dbReference type="FunFam" id="3.20.20.190:FF:000096">
    <property type="entry name" value="Phospholipase D LiSicTox-betaID1"/>
    <property type="match status" value="1"/>
</dbReference>
<dbReference type="Gene3D" id="3.20.20.190">
    <property type="entry name" value="Phosphatidylinositol (PI) phosphodiesterase"/>
    <property type="match status" value="1"/>
</dbReference>
<dbReference type="InterPro" id="IPR017946">
    <property type="entry name" value="PLC-like_Pdiesterase_TIM-brl"/>
</dbReference>
<dbReference type="Pfam" id="PF13653">
    <property type="entry name" value="GDPD_2"/>
    <property type="match status" value="1"/>
</dbReference>
<dbReference type="SUPFAM" id="SSF51695">
    <property type="entry name" value="PLC-like phosphodiesterases"/>
    <property type="match status" value="1"/>
</dbReference>
<reference key="1">
    <citation type="journal article" date="2007" name="Biochimie">
        <title>Two novel dermonecrotic toxins LiRecDT4 and LiRecDT5 from Brown spider (Loxosceles intermedia) venom: from cloning to functional characterization.</title>
        <authorList>
            <person name="da Silveira R.B."/>
            <person name="Pigozzo R.B."/>
            <person name="Chaim O.M."/>
            <person name="Appel M.H."/>
            <person name="Silva D.T."/>
            <person name="Dreyfuss J.L."/>
            <person name="Toma L."/>
            <person name="Dietrich C.P."/>
            <person name="Nader H.B."/>
            <person name="Veiga S.S."/>
            <person name="Gremski W."/>
        </authorList>
    </citation>
    <scope>NUCLEOTIDE SEQUENCE [MRNA]</scope>
    <scope>FUNCTION</scope>
    <scope>BIOASSAY</scope>
    <scope>CATALYTIC ACTIVITY</scope>
    <source>
        <tissue>Venom gland</tissue>
    </source>
</reference>
<reference key="2">
    <citation type="journal article" date="2011" name="J. Cell. Biochem.">
        <title>The relationship between calcium and the metabolism of plasma membrane phospholipids in hemolysis induced by brown spider venom phospholipase-D toxin.</title>
        <authorList>
            <person name="Chaves-Moreira D."/>
            <person name="Souza F.N."/>
            <person name="Fogaca R.T."/>
            <person name="Mangili O.C."/>
            <person name="Gremski W."/>
            <person name="Senff-Ribeiro A."/>
            <person name="Chaim O.M."/>
            <person name="Veiga S.S."/>
        </authorList>
    </citation>
    <scope>FUNCTION</scope>
</reference>